<proteinExistence type="evidence at protein level"/>
<protein>
    <recommendedName>
        <fullName evidence="10">AA9 family lytic polysaccharide monooxygenase C</fullName>
        <shortName evidence="10">AfAA9C</shortName>
        <ecNumber evidence="9">1.14.99.56</ecNumber>
    </recommendedName>
    <alternativeName>
        <fullName evidence="11">Cellulase AA9A</fullName>
    </alternativeName>
    <alternativeName>
        <fullName evidence="11">Endo-beta-1,4-glucanase AA9A</fullName>
        <shortName evidence="11">Endoglucanase AA9A</shortName>
    </alternativeName>
    <alternativeName>
        <fullName evidence="11">Glycosyl hydrolase 61 family protein AA9A</fullName>
    </alternativeName>
</protein>
<comment type="function">
    <text evidence="9">Lytic polysaccharide monooxygenase (LPMO) that depolymerizes crystalline and amorphous polysaccharides via the oxidation of scissile alpha- or beta-(1-4)-glycosidic bonds, yielding C4 oxidation products (PubMed:33199373). Catalysis by LPMOs requires the reduction of the active-site copper from Cu(II) to Cu(I) by a reducing agent and H(2)O(2) or O(2) as a cosubstrate (PubMed:33199373). Active on cellulose and cello-oligosaccharides, as well as plant cell wall-derived hemicellulosic polysaccharides (PubMed:33199373). Also active on cello-oligosaccharides such as cellohexaose, cellopentaose or cellotetraose (PubMed:33199373).</text>
</comment>
<comment type="catalytic activity">
    <reaction evidence="9">
        <text>[(1-&gt;4)-beta-D-glucosyl]n+m + reduced acceptor + O2 = 4-dehydro-beta-D-glucosyl-[(1-&gt;4)-beta-D-glucosyl]n-1 + [(1-&gt;4)-beta-D-glucosyl]m + acceptor + H2O.</text>
        <dbReference type="EC" id="1.14.99.56"/>
    </reaction>
</comment>
<comment type="cofactor">
    <cofactor evidence="4">
        <name>Cu(2+)</name>
        <dbReference type="ChEBI" id="CHEBI:29036"/>
    </cofactor>
    <text evidence="4">Binds 1 copper ion per subunit.</text>
</comment>
<comment type="subcellular location">
    <subcellularLocation>
        <location evidence="12">Secreted</location>
    </subcellularLocation>
</comment>
<comment type="domain">
    <text evidence="5">Has a modular structure: an endo-beta-1,4-glucanase catalytic module at the N-terminus, a linker rich in serines and threonines, and a C-terminal carbohydrate-binding module (CBM). The CBM domain is essential for binding to and subsequent oxidative degradation of polysaccharide substrate.</text>
</comment>
<comment type="biotechnology">
    <text evidence="4">Lignocellulose is the most abundant polymeric composite on Earth and is a recalcitrant but promising renewable substrate for industrial biotechnology applications. Together with cellobiose dehydrogenases (CDHs) an enzymatic system capable of oxidative cellulose cleavage is formed, which increases the efficiency of cellulases and put LPMOs at focus of biofuel research.</text>
</comment>
<comment type="similarity">
    <text evidence="11">Belongs to the polysaccharide monooxygenase AA9 family.</text>
</comment>
<reference key="1">
    <citation type="journal article" date="2005" name="Nature">
        <title>Genomic sequence of the pathogenic and allergenic filamentous fungus Aspergillus fumigatus.</title>
        <authorList>
            <person name="Nierman W.C."/>
            <person name="Pain A."/>
            <person name="Anderson M.J."/>
            <person name="Wortman J.R."/>
            <person name="Kim H.S."/>
            <person name="Arroyo J."/>
            <person name="Berriman M."/>
            <person name="Abe K."/>
            <person name="Archer D.B."/>
            <person name="Bermejo C."/>
            <person name="Bennett J.W."/>
            <person name="Bowyer P."/>
            <person name="Chen D."/>
            <person name="Collins M."/>
            <person name="Coulsen R."/>
            <person name="Davies R."/>
            <person name="Dyer P.S."/>
            <person name="Farman M.L."/>
            <person name="Fedorova N."/>
            <person name="Fedorova N.D."/>
            <person name="Feldblyum T.V."/>
            <person name="Fischer R."/>
            <person name="Fosker N."/>
            <person name="Fraser A."/>
            <person name="Garcia J.L."/>
            <person name="Garcia M.J."/>
            <person name="Goble A."/>
            <person name="Goldman G.H."/>
            <person name="Gomi K."/>
            <person name="Griffith-Jones S."/>
            <person name="Gwilliam R."/>
            <person name="Haas B.J."/>
            <person name="Haas H."/>
            <person name="Harris D.E."/>
            <person name="Horiuchi H."/>
            <person name="Huang J."/>
            <person name="Humphray S."/>
            <person name="Jimenez J."/>
            <person name="Keller N."/>
            <person name="Khouri H."/>
            <person name="Kitamoto K."/>
            <person name="Kobayashi T."/>
            <person name="Konzack S."/>
            <person name="Kulkarni R."/>
            <person name="Kumagai T."/>
            <person name="Lafton A."/>
            <person name="Latge J.-P."/>
            <person name="Li W."/>
            <person name="Lord A."/>
            <person name="Lu C."/>
            <person name="Majoros W.H."/>
            <person name="May G.S."/>
            <person name="Miller B.L."/>
            <person name="Mohamoud Y."/>
            <person name="Molina M."/>
            <person name="Monod M."/>
            <person name="Mouyna I."/>
            <person name="Mulligan S."/>
            <person name="Murphy L.D."/>
            <person name="O'Neil S."/>
            <person name="Paulsen I."/>
            <person name="Penalva M.A."/>
            <person name="Pertea M."/>
            <person name="Price C."/>
            <person name="Pritchard B.L."/>
            <person name="Quail M.A."/>
            <person name="Rabbinowitsch E."/>
            <person name="Rawlins N."/>
            <person name="Rajandream M.A."/>
            <person name="Reichard U."/>
            <person name="Renauld H."/>
            <person name="Robson G.D."/>
            <person name="Rodriguez de Cordoba S."/>
            <person name="Rodriguez-Pena J.M."/>
            <person name="Ronning C.M."/>
            <person name="Rutter S."/>
            <person name="Salzberg S.L."/>
            <person name="Sanchez M."/>
            <person name="Sanchez-Ferrero J.C."/>
            <person name="Saunders D."/>
            <person name="Seeger K."/>
            <person name="Squares R."/>
            <person name="Squares S."/>
            <person name="Takeuchi M."/>
            <person name="Tekaia F."/>
            <person name="Turner G."/>
            <person name="Vazquez de Aldana C.R."/>
            <person name="Weidman J."/>
            <person name="White O."/>
            <person name="Woodward J.R."/>
            <person name="Yu J.-H."/>
            <person name="Fraser C.M."/>
            <person name="Galagan J.E."/>
            <person name="Asai K."/>
            <person name="Machida M."/>
            <person name="Hall N."/>
            <person name="Barrell B.G."/>
            <person name="Denning D.W."/>
        </authorList>
    </citation>
    <scope>NUCLEOTIDE SEQUENCE [LARGE SCALE GENOMIC DNA]</scope>
    <source>
        <strain>ATCC MYA-4609 / CBS 101355 / FGSC A1100 / Af293</strain>
    </source>
</reference>
<reference key="2">
    <citation type="journal article" date="2021" name="J. Biol. Chem.">
        <title>Identification of the molecular determinants driving the substrate specificity of fungal lytic polysaccharide monooxygenases (LPMOs).</title>
        <authorList>
            <person name="Frandsen K.E.H."/>
            <person name="Haon M."/>
            <person name="Grisel S."/>
            <person name="Henrissat B."/>
            <person name="Lo Leggio L."/>
            <person name="Berrin J.G."/>
        </authorList>
    </citation>
    <scope>FUNCTION</scope>
    <scope>CATALYTIC ACTIVITY</scope>
</reference>
<feature type="signal peptide" evidence="6">
    <location>
        <begin position="1"/>
        <end position="19"/>
    </location>
</feature>
<feature type="chain" id="PRO_0000394063" description="AA9 family lytic polysaccharide monooxygenase C">
    <location>
        <begin position="20"/>
        <end position="349"/>
    </location>
</feature>
<feature type="domain" description="CBM1" evidence="7">
    <location>
        <begin position="311"/>
        <end position="347"/>
    </location>
</feature>
<feature type="region of interest" description="Disordered" evidence="8">
    <location>
        <begin position="233"/>
        <end position="304"/>
    </location>
</feature>
<feature type="compositionally biased region" description="Low complexity" evidence="8">
    <location>
        <begin position="234"/>
        <end position="262"/>
    </location>
</feature>
<feature type="compositionally biased region" description="Low complexity" evidence="8">
    <location>
        <begin position="269"/>
        <end position="304"/>
    </location>
</feature>
<feature type="binding site" evidence="2">
    <location>
        <position position="20"/>
    </location>
    <ligand>
        <name>Cu(2+)</name>
        <dbReference type="ChEBI" id="CHEBI:29036"/>
        <note>catalytic</note>
    </ligand>
</feature>
<feature type="binding site" evidence="2">
    <location>
        <position position="102"/>
    </location>
    <ligand>
        <name>Cu(2+)</name>
        <dbReference type="ChEBI" id="CHEBI:29036"/>
        <note>catalytic</note>
    </ligand>
</feature>
<feature type="binding site" evidence="3">
    <location>
        <position position="169"/>
    </location>
    <ligand>
        <name>O2</name>
        <dbReference type="ChEBI" id="CHEBI:15379"/>
    </ligand>
</feature>
<feature type="binding site" evidence="2">
    <location>
        <position position="180"/>
    </location>
    <ligand>
        <name>Cu(2+)</name>
        <dbReference type="ChEBI" id="CHEBI:29036"/>
        <note>catalytic</note>
    </ligand>
</feature>
<feature type="glycosylation site" description="N-linked (GlcNAc...) asparagine" evidence="6">
    <location>
        <position position="323"/>
    </location>
</feature>
<feature type="disulfide bond" evidence="2">
    <location>
        <begin position="62"/>
        <end position="183"/>
    </location>
</feature>
<feature type="disulfide bond" evidence="1">
    <location>
        <begin position="319"/>
        <end position="336"/>
    </location>
</feature>
<feature type="disulfide bond" evidence="1">
    <location>
        <begin position="330"/>
        <end position="346"/>
    </location>
</feature>
<organism>
    <name type="scientific">Aspergillus fumigatus (strain ATCC MYA-4609 / CBS 101355 / FGSC A1100 / Af293)</name>
    <name type="common">Neosartorya fumigata</name>
    <dbReference type="NCBI Taxonomy" id="330879"/>
    <lineage>
        <taxon>Eukaryota</taxon>
        <taxon>Fungi</taxon>
        <taxon>Dikarya</taxon>
        <taxon>Ascomycota</taxon>
        <taxon>Pezizomycotina</taxon>
        <taxon>Eurotiomycetes</taxon>
        <taxon>Eurotiomycetidae</taxon>
        <taxon>Eurotiales</taxon>
        <taxon>Aspergillaceae</taxon>
        <taxon>Aspergillus</taxon>
        <taxon>Aspergillus subgen. Fumigati</taxon>
    </lineage>
</organism>
<sequence>MKSTFGLLALAAAAKLVSAHATVHAVWINDVDQGAGNSADGYIRSPPNNSPITDVTSTDMTCNVNGKNPVAKTLSVKAGDKVTFEWHHDTRSDSDDIIASSHMGPVMVYMAPTEKGTAGNGWVKIAEEGYSNGKWAVANLIANRGKHSITVPDVPAGEYLLRPEIIALHEGNRQGGAQFYMECVQVKVTSAGTKTLPAGVSIPGAYKATDPGVLFDMYNSFTSYPIPGPAVWDGSSSGSSGSSGSSPATTTAPAVSVTAAPTKEAPVDTSATPTTFVTATKPATTAAPAAPSASSGSNSGSDSCNSGSASGSVKIYGQCGGQNYSGPTSCEAGLICKEWNPYYHQCVSA</sequence>
<dbReference type="EC" id="1.14.99.56" evidence="9"/>
<dbReference type="EMBL" id="AAHF01000013">
    <property type="protein sequence ID" value="EAL85444.1"/>
    <property type="molecule type" value="Genomic_DNA"/>
</dbReference>
<dbReference type="RefSeq" id="XP_747482.1">
    <property type="nucleotide sequence ID" value="XM_742389.1"/>
</dbReference>
<dbReference type="SMR" id="Q4WBU0"/>
<dbReference type="STRING" id="330879.Q4WBU0"/>
<dbReference type="GlyCosmos" id="Q4WBU0">
    <property type="glycosylation" value="1 site, No reported glycans"/>
</dbReference>
<dbReference type="EnsemblFungi" id="EAL85444">
    <property type="protein sequence ID" value="EAL85444"/>
    <property type="gene ID" value="AFUA_8G06830"/>
</dbReference>
<dbReference type="GeneID" id="3504710"/>
<dbReference type="KEGG" id="afm:AFUA_8G06830"/>
<dbReference type="VEuPathDB" id="FungiDB:Afu8g06830"/>
<dbReference type="eggNOG" id="ENOG502RXMI">
    <property type="taxonomic scope" value="Eukaryota"/>
</dbReference>
<dbReference type="HOGENOM" id="CLU_031730_0_0_1"/>
<dbReference type="InParanoid" id="Q4WBU0"/>
<dbReference type="OMA" id="YIDSPPN"/>
<dbReference type="OrthoDB" id="5558646at2759"/>
<dbReference type="Proteomes" id="UP000002530">
    <property type="component" value="Chromosome 8"/>
</dbReference>
<dbReference type="GO" id="GO:0005576">
    <property type="term" value="C:extracellular region"/>
    <property type="evidence" value="ECO:0007669"/>
    <property type="project" value="UniProtKB-SubCell"/>
</dbReference>
<dbReference type="GO" id="GO:0008810">
    <property type="term" value="F:cellulase activity"/>
    <property type="evidence" value="ECO:0007669"/>
    <property type="project" value="UniProtKB-EC"/>
</dbReference>
<dbReference type="GO" id="GO:0030248">
    <property type="term" value="F:cellulose binding"/>
    <property type="evidence" value="ECO:0007669"/>
    <property type="project" value="InterPro"/>
</dbReference>
<dbReference type="GO" id="GO:0046872">
    <property type="term" value="F:metal ion binding"/>
    <property type="evidence" value="ECO:0007669"/>
    <property type="project" value="UniProtKB-KW"/>
</dbReference>
<dbReference type="GO" id="GO:0004497">
    <property type="term" value="F:monooxygenase activity"/>
    <property type="evidence" value="ECO:0007669"/>
    <property type="project" value="UniProtKB-KW"/>
</dbReference>
<dbReference type="GO" id="GO:0030245">
    <property type="term" value="P:cellulose catabolic process"/>
    <property type="evidence" value="ECO:0007669"/>
    <property type="project" value="UniProtKB-KW"/>
</dbReference>
<dbReference type="CDD" id="cd21175">
    <property type="entry name" value="LPMO_AA9"/>
    <property type="match status" value="1"/>
</dbReference>
<dbReference type="Gene3D" id="2.70.50.70">
    <property type="match status" value="1"/>
</dbReference>
<dbReference type="InterPro" id="IPR049892">
    <property type="entry name" value="AA9"/>
</dbReference>
<dbReference type="InterPro" id="IPR005103">
    <property type="entry name" value="AA9_LPMO"/>
</dbReference>
<dbReference type="InterPro" id="IPR035971">
    <property type="entry name" value="CBD_sf"/>
</dbReference>
<dbReference type="InterPro" id="IPR000254">
    <property type="entry name" value="Cellulose-bd_dom_fun"/>
</dbReference>
<dbReference type="PANTHER" id="PTHR33353:SF17">
    <property type="entry name" value="ENDO-BETA-1,4-GLUCANASE D"/>
    <property type="match status" value="1"/>
</dbReference>
<dbReference type="PANTHER" id="PTHR33353">
    <property type="entry name" value="PUTATIVE (AFU_ORTHOLOGUE AFUA_1G12560)-RELATED"/>
    <property type="match status" value="1"/>
</dbReference>
<dbReference type="Pfam" id="PF03443">
    <property type="entry name" value="AA9"/>
    <property type="match status" value="1"/>
</dbReference>
<dbReference type="Pfam" id="PF00734">
    <property type="entry name" value="CBM_1"/>
    <property type="match status" value="1"/>
</dbReference>
<dbReference type="SMART" id="SM00236">
    <property type="entry name" value="fCBD"/>
    <property type="match status" value="1"/>
</dbReference>
<dbReference type="SUPFAM" id="SSF57180">
    <property type="entry name" value="Cellulose-binding domain"/>
    <property type="match status" value="1"/>
</dbReference>
<dbReference type="PROSITE" id="PS00562">
    <property type="entry name" value="CBM1_1"/>
    <property type="match status" value="1"/>
</dbReference>
<dbReference type="PROSITE" id="PS51164">
    <property type="entry name" value="CBM1_2"/>
    <property type="match status" value="1"/>
</dbReference>
<keyword id="KW-0119">Carbohydrate metabolism</keyword>
<keyword id="KW-0136">Cellulose degradation</keyword>
<keyword id="KW-0186">Copper</keyword>
<keyword id="KW-1015">Disulfide bond</keyword>
<keyword id="KW-0325">Glycoprotein</keyword>
<keyword id="KW-0479">Metal-binding</keyword>
<keyword id="KW-0503">Monooxygenase</keyword>
<keyword id="KW-0560">Oxidoreductase</keyword>
<keyword id="KW-0624">Polysaccharide degradation</keyword>
<keyword id="KW-1185">Reference proteome</keyword>
<keyword id="KW-0964">Secreted</keyword>
<keyword id="KW-0732">Signal</keyword>
<evidence type="ECO:0000250" key="1"/>
<evidence type="ECO:0000250" key="2">
    <source>
        <dbReference type="UniProtKB" id="A0A223GEC9"/>
    </source>
</evidence>
<evidence type="ECO:0000250" key="3">
    <source>
        <dbReference type="UniProtKB" id="Q1K8B6"/>
    </source>
</evidence>
<evidence type="ECO:0000250" key="4">
    <source>
        <dbReference type="UniProtKB" id="Q4WP32"/>
    </source>
</evidence>
<evidence type="ECO:0000250" key="5">
    <source>
        <dbReference type="UniProtKB" id="Q7S439"/>
    </source>
</evidence>
<evidence type="ECO:0000255" key="6"/>
<evidence type="ECO:0000255" key="7">
    <source>
        <dbReference type="PROSITE-ProRule" id="PRU00597"/>
    </source>
</evidence>
<evidence type="ECO:0000256" key="8">
    <source>
        <dbReference type="SAM" id="MobiDB-lite"/>
    </source>
</evidence>
<evidence type="ECO:0000269" key="9">
    <source>
    </source>
</evidence>
<evidence type="ECO:0000303" key="10">
    <source>
    </source>
</evidence>
<evidence type="ECO:0000305" key="11"/>
<evidence type="ECO:0000305" key="12">
    <source>
    </source>
</evidence>
<gene>
    <name evidence="10" type="primary">AA9C</name>
    <name type="ORF">AFUA_8G06830</name>
</gene>
<accession>Q4WBU0</accession>
<name>LP9C_ASPFU</name>